<dbReference type="EMBL" id="AL079349">
    <property type="status" value="NOT_ANNOTATED_CDS"/>
    <property type="molecule type" value="Genomic_DNA"/>
</dbReference>
<dbReference type="EMBL" id="CP002687">
    <property type="protein sequence ID" value="AEE83227.1"/>
    <property type="molecule type" value="Genomic_DNA"/>
</dbReference>
<dbReference type="EMBL" id="DQ912221">
    <property type="protein sequence ID" value="ABI34051.1"/>
    <property type="molecule type" value="Genomic_DNA"/>
</dbReference>
<dbReference type="EMBL" id="DQ912267">
    <property type="protein sequence ID" value="ABK27985.1"/>
    <property type="status" value="ALT_SEQ"/>
    <property type="molecule type" value="Genomic_DNA"/>
</dbReference>
<dbReference type="EMBL" id="EF182816">
    <property type="status" value="NOT_ANNOTATED_CDS"/>
    <property type="molecule type" value="mRNA"/>
</dbReference>
<dbReference type="RefSeq" id="NP_001078382.1">
    <property type="nucleotide sequence ID" value="NM_001084913.2"/>
</dbReference>
<dbReference type="SMR" id="A7REH2"/>
<dbReference type="STRING" id="3702.A7REH2"/>
<dbReference type="PaxDb" id="3702-AT4G13075.1"/>
<dbReference type="ProteomicsDB" id="228159"/>
<dbReference type="EnsemblPlants" id="AT4G13075.1">
    <property type="protein sequence ID" value="AT4G13075.1"/>
    <property type="gene ID" value="AT4G13075"/>
</dbReference>
<dbReference type="GeneID" id="5008137"/>
<dbReference type="Gramene" id="AT4G13075.1">
    <property type="protein sequence ID" value="AT4G13075.1"/>
    <property type="gene ID" value="AT4G13075"/>
</dbReference>
<dbReference type="KEGG" id="ath:AT4G13075"/>
<dbReference type="Araport" id="AT4G13075"/>
<dbReference type="TAIR" id="AT4G13075">
    <property type="gene designation" value="RALFL30"/>
</dbReference>
<dbReference type="HOGENOM" id="CLU_200725_0_0_1"/>
<dbReference type="InParanoid" id="A7REH2"/>
<dbReference type="OMA" id="PRERVNE"/>
<dbReference type="PhylomeDB" id="A7REH2"/>
<dbReference type="PRO" id="PR:A7REH2"/>
<dbReference type="Proteomes" id="UP000006548">
    <property type="component" value="Chromosome 4"/>
</dbReference>
<dbReference type="ExpressionAtlas" id="A7REH2">
    <property type="expression patterns" value="baseline and differential"/>
</dbReference>
<dbReference type="GO" id="GO:0048046">
    <property type="term" value="C:apoplast"/>
    <property type="evidence" value="ECO:0000250"/>
    <property type="project" value="TAIR"/>
</dbReference>
<dbReference type="GO" id="GO:0005179">
    <property type="term" value="F:hormone activity"/>
    <property type="evidence" value="ECO:0000250"/>
    <property type="project" value="UniProtKB"/>
</dbReference>
<dbReference type="GO" id="GO:0019722">
    <property type="term" value="P:calcium-mediated signaling"/>
    <property type="evidence" value="ECO:0000250"/>
    <property type="project" value="UniProtKB"/>
</dbReference>
<dbReference type="GO" id="GO:0007267">
    <property type="term" value="P:cell-cell signaling"/>
    <property type="evidence" value="ECO:0000250"/>
    <property type="project" value="TAIR"/>
</dbReference>
<dbReference type="GO" id="GO:0040008">
    <property type="term" value="P:regulation of growth"/>
    <property type="evidence" value="ECO:0007669"/>
    <property type="project" value="UniProtKB-ARBA"/>
</dbReference>
<dbReference type="InterPro" id="IPR008801">
    <property type="entry name" value="RALF"/>
</dbReference>
<dbReference type="Pfam" id="PF05498">
    <property type="entry name" value="RALF"/>
    <property type="match status" value="1"/>
</dbReference>
<gene>
    <name type="primary">RALFL30</name>
    <name type="ordered locus">At4g13075</name>
    <name type="ORF">F25G13</name>
</gene>
<comment type="function">
    <text evidence="1">Cell signaling peptide that may regulate plant stress, growth, and development. Mediates a rapid alkalinization of extracellular space by mediating a transient increase in the cytoplasmic Ca(2+) concentration leading to a calcium-dependent signaling events through a cell surface receptor and a concomitant activation of some intracellular mitogen-activated protein kinases (By similarity).</text>
</comment>
<comment type="subcellular location">
    <subcellularLocation>
        <location evidence="1">Secreted</location>
    </subcellularLocation>
</comment>
<comment type="similarity">
    <text evidence="3">Belongs to the plant rapid alkalinization factor (RALF) family.</text>
</comment>
<comment type="sequence caution" evidence="3">
    <conflict type="erroneous termination">
        <sequence resource="EMBL-CDS" id="ABK27985"/>
    </conflict>
    <text>Extended C-terminus.</text>
</comment>
<sequence length="76" mass="8217">MKAWVICLMVISIFMMIEPTLAAGGGKFLNPGVLDPCLRPNPPPECQAPGSAGKPRERVNEYKVGCSKLTRCDRVG</sequence>
<evidence type="ECO:0000250" key="1"/>
<evidence type="ECO:0000255" key="2"/>
<evidence type="ECO:0000305" key="3"/>
<reference key="1">
    <citation type="journal article" date="1999" name="Nature">
        <title>Sequence and analysis of chromosome 4 of the plant Arabidopsis thaliana.</title>
        <authorList>
            <person name="Mayer K.F.X."/>
            <person name="Schueller C."/>
            <person name="Wambutt R."/>
            <person name="Murphy G."/>
            <person name="Volckaert G."/>
            <person name="Pohl T."/>
            <person name="Duesterhoeft A."/>
            <person name="Stiekema W."/>
            <person name="Entian K.-D."/>
            <person name="Terryn N."/>
            <person name="Harris B."/>
            <person name="Ansorge W."/>
            <person name="Brandt P."/>
            <person name="Grivell L.A."/>
            <person name="Rieger M."/>
            <person name="Weichselgartner M."/>
            <person name="de Simone V."/>
            <person name="Obermaier B."/>
            <person name="Mache R."/>
            <person name="Mueller M."/>
            <person name="Kreis M."/>
            <person name="Delseny M."/>
            <person name="Puigdomenech P."/>
            <person name="Watson M."/>
            <person name="Schmidtheini T."/>
            <person name="Reichert B."/>
            <person name="Portetelle D."/>
            <person name="Perez-Alonso M."/>
            <person name="Boutry M."/>
            <person name="Bancroft I."/>
            <person name="Vos P."/>
            <person name="Hoheisel J."/>
            <person name="Zimmermann W."/>
            <person name="Wedler H."/>
            <person name="Ridley P."/>
            <person name="Langham S.-A."/>
            <person name="McCullagh B."/>
            <person name="Bilham L."/>
            <person name="Robben J."/>
            <person name="van der Schueren J."/>
            <person name="Grymonprez B."/>
            <person name="Chuang Y.-J."/>
            <person name="Vandenbussche F."/>
            <person name="Braeken M."/>
            <person name="Weltjens I."/>
            <person name="Voet M."/>
            <person name="Bastiaens I."/>
            <person name="Aert R."/>
            <person name="Defoor E."/>
            <person name="Weitzenegger T."/>
            <person name="Bothe G."/>
            <person name="Ramsperger U."/>
            <person name="Hilbert H."/>
            <person name="Braun M."/>
            <person name="Holzer E."/>
            <person name="Brandt A."/>
            <person name="Peters S."/>
            <person name="van Staveren M."/>
            <person name="Dirkse W."/>
            <person name="Mooijman P."/>
            <person name="Klein Lankhorst R."/>
            <person name="Rose M."/>
            <person name="Hauf J."/>
            <person name="Koetter P."/>
            <person name="Berneiser S."/>
            <person name="Hempel S."/>
            <person name="Feldpausch M."/>
            <person name="Lamberth S."/>
            <person name="Van den Daele H."/>
            <person name="De Keyser A."/>
            <person name="Buysshaert C."/>
            <person name="Gielen J."/>
            <person name="Villarroel R."/>
            <person name="De Clercq R."/>
            <person name="van Montagu M."/>
            <person name="Rogers J."/>
            <person name="Cronin A."/>
            <person name="Quail M.A."/>
            <person name="Bray-Allen S."/>
            <person name="Clark L."/>
            <person name="Doggett J."/>
            <person name="Hall S."/>
            <person name="Kay M."/>
            <person name="Lennard N."/>
            <person name="McLay K."/>
            <person name="Mayes R."/>
            <person name="Pettett A."/>
            <person name="Rajandream M.A."/>
            <person name="Lyne M."/>
            <person name="Benes V."/>
            <person name="Rechmann S."/>
            <person name="Borkova D."/>
            <person name="Bloecker H."/>
            <person name="Scharfe M."/>
            <person name="Grimm M."/>
            <person name="Loehnert T.-H."/>
            <person name="Dose S."/>
            <person name="de Haan M."/>
            <person name="Maarse A.C."/>
            <person name="Schaefer M."/>
            <person name="Mueller-Auer S."/>
            <person name="Gabel C."/>
            <person name="Fuchs M."/>
            <person name="Fartmann B."/>
            <person name="Granderath K."/>
            <person name="Dauner D."/>
            <person name="Herzl A."/>
            <person name="Neumann S."/>
            <person name="Argiriou A."/>
            <person name="Vitale D."/>
            <person name="Liguori R."/>
            <person name="Piravandi E."/>
            <person name="Massenet O."/>
            <person name="Quigley F."/>
            <person name="Clabauld G."/>
            <person name="Muendlein A."/>
            <person name="Felber R."/>
            <person name="Schnabl S."/>
            <person name="Hiller R."/>
            <person name="Schmidt W."/>
            <person name="Lecharny A."/>
            <person name="Aubourg S."/>
            <person name="Chefdor F."/>
            <person name="Cooke R."/>
            <person name="Berger C."/>
            <person name="Monfort A."/>
            <person name="Casacuberta E."/>
            <person name="Gibbons T."/>
            <person name="Weber N."/>
            <person name="Vandenbol M."/>
            <person name="Bargues M."/>
            <person name="Terol J."/>
            <person name="Torres A."/>
            <person name="Perez-Perez A."/>
            <person name="Purnelle B."/>
            <person name="Bent E."/>
            <person name="Johnson S."/>
            <person name="Tacon D."/>
            <person name="Jesse T."/>
            <person name="Heijnen L."/>
            <person name="Schwarz S."/>
            <person name="Scholler P."/>
            <person name="Heber S."/>
            <person name="Francs P."/>
            <person name="Bielke C."/>
            <person name="Frishman D."/>
            <person name="Haase D."/>
            <person name="Lemcke K."/>
            <person name="Mewes H.-W."/>
            <person name="Stocker S."/>
            <person name="Zaccaria P."/>
            <person name="Bevan M."/>
            <person name="Wilson R.K."/>
            <person name="de la Bastide M."/>
            <person name="Habermann K."/>
            <person name="Parnell L."/>
            <person name="Dedhia N."/>
            <person name="Gnoj L."/>
            <person name="Schutz K."/>
            <person name="Huang E."/>
            <person name="Spiegel L."/>
            <person name="Sekhon M."/>
            <person name="Murray J."/>
            <person name="Sheet P."/>
            <person name="Cordes M."/>
            <person name="Abu-Threideh J."/>
            <person name="Stoneking T."/>
            <person name="Kalicki J."/>
            <person name="Graves T."/>
            <person name="Harmon G."/>
            <person name="Edwards J."/>
            <person name="Latreille P."/>
            <person name="Courtney L."/>
            <person name="Cloud J."/>
            <person name="Abbott A."/>
            <person name="Scott K."/>
            <person name="Johnson D."/>
            <person name="Minx P."/>
            <person name="Bentley D."/>
            <person name="Fulton B."/>
            <person name="Miller N."/>
            <person name="Greco T."/>
            <person name="Kemp K."/>
            <person name="Kramer J."/>
            <person name="Fulton L."/>
            <person name="Mardis E."/>
            <person name="Dante M."/>
            <person name="Pepin K."/>
            <person name="Hillier L.W."/>
            <person name="Nelson J."/>
            <person name="Spieth J."/>
            <person name="Ryan E."/>
            <person name="Andrews S."/>
            <person name="Geisel C."/>
            <person name="Layman D."/>
            <person name="Du H."/>
            <person name="Ali J."/>
            <person name="Berghoff A."/>
            <person name="Jones K."/>
            <person name="Drone K."/>
            <person name="Cotton M."/>
            <person name="Joshu C."/>
            <person name="Antonoiu B."/>
            <person name="Zidanic M."/>
            <person name="Strong C."/>
            <person name="Sun H."/>
            <person name="Lamar B."/>
            <person name="Yordan C."/>
            <person name="Ma P."/>
            <person name="Zhong J."/>
            <person name="Preston R."/>
            <person name="Vil D."/>
            <person name="Shekher M."/>
            <person name="Matero A."/>
            <person name="Shah R."/>
            <person name="Swaby I.K."/>
            <person name="O'Shaughnessy A."/>
            <person name="Rodriguez M."/>
            <person name="Hoffman J."/>
            <person name="Till S."/>
            <person name="Granat S."/>
            <person name="Shohdy N."/>
            <person name="Hasegawa A."/>
            <person name="Hameed A."/>
            <person name="Lodhi M."/>
            <person name="Johnson A."/>
            <person name="Chen E."/>
            <person name="Marra M.A."/>
            <person name="Martienssen R."/>
            <person name="McCombie W.R."/>
        </authorList>
    </citation>
    <scope>NUCLEOTIDE SEQUENCE [LARGE SCALE GENOMIC DNA]</scope>
    <source>
        <strain>cv. Columbia</strain>
    </source>
</reference>
<reference key="2">
    <citation type="journal article" date="2017" name="Plant J.">
        <title>Araport11: a complete reannotation of the Arabidopsis thaliana reference genome.</title>
        <authorList>
            <person name="Cheng C.Y."/>
            <person name="Krishnakumar V."/>
            <person name="Chan A.P."/>
            <person name="Thibaud-Nissen F."/>
            <person name="Schobel S."/>
            <person name="Town C.D."/>
        </authorList>
    </citation>
    <scope>GENOME REANNOTATION</scope>
    <source>
        <strain>cv. Columbia</strain>
    </source>
</reference>
<reference key="3">
    <citation type="journal article" date="2006" name="Plant Biotechnol. J.">
        <title>Simultaneous high-throughput recombinational cloning of open reading frames in closed and open configurations.</title>
        <authorList>
            <person name="Underwood B.A."/>
            <person name="Vanderhaeghen R."/>
            <person name="Whitford R."/>
            <person name="Town C.D."/>
            <person name="Hilson P."/>
        </authorList>
    </citation>
    <scope>NUCLEOTIDE SEQUENCE [LARGE SCALE GENOMIC DNA / MRNA]</scope>
    <source>
        <strain>cv. Columbia</strain>
    </source>
</reference>
<reference key="4">
    <citation type="journal article" date="2002" name="In Silico Biol.">
        <title>Peptomics, identification of novel cationic Arabidopsis peptides with conserved sequence motifs.</title>
        <authorList>
            <person name="Olsen A.N."/>
            <person name="Mundy J."/>
            <person name="Skriver K."/>
        </authorList>
    </citation>
    <scope>GENE FAMILY</scope>
    <scope>NOMENCLATURE</scope>
</reference>
<protein>
    <recommendedName>
        <fullName>Protein RALF-like 30</fullName>
    </recommendedName>
</protein>
<keyword id="KW-1015">Disulfide bond</keyword>
<keyword id="KW-0372">Hormone</keyword>
<keyword id="KW-1185">Reference proteome</keyword>
<keyword id="KW-0964">Secreted</keyword>
<keyword id="KW-0732">Signal</keyword>
<feature type="signal peptide" evidence="2">
    <location>
        <begin position="1"/>
        <end position="22"/>
    </location>
</feature>
<feature type="chain" id="PRO_0000420328" description="Protein RALF-like 30">
    <location>
        <begin position="23"/>
        <end position="76"/>
    </location>
</feature>
<feature type="disulfide bond" evidence="1">
    <location>
        <begin position="37"/>
        <end position="46"/>
    </location>
</feature>
<feature type="disulfide bond" evidence="1">
    <location>
        <begin position="66"/>
        <end position="72"/>
    </location>
</feature>
<name>RLF30_ARATH</name>
<proteinExistence type="inferred from homology"/>
<accession>A7REH2</accession>
<accession>A0MJW8</accession>
<organism>
    <name type="scientific">Arabidopsis thaliana</name>
    <name type="common">Mouse-ear cress</name>
    <dbReference type="NCBI Taxonomy" id="3702"/>
    <lineage>
        <taxon>Eukaryota</taxon>
        <taxon>Viridiplantae</taxon>
        <taxon>Streptophyta</taxon>
        <taxon>Embryophyta</taxon>
        <taxon>Tracheophyta</taxon>
        <taxon>Spermatophyta</taxon>
        <taxon>Magnoliopsida</taxon>
        <taxon>eudicotyledons</taxon>
        <taxon>Gunneridae</taxon>
        <taxon>Pentapetalae</taxon>
        <taxon>rosids</taxon>
        <taxon>malvids</taxon>
        <taxon>Brassicales</taxon>
        <taxon>Brassicaceae</taxon>
        <taxon>Camelineae</taxon>
        <taxon>Arabidopsis</taxon>
    </lineage>
</organism>